<sequence>MEISINKEKALVVFSGGQDSTTCLFWAKKRYKEVVAVSFDYNQKHKLELECAKDICKKHGVEHHILDMKLLNQLAPNSLTRADMKVDEDAPKDGPPNTFVDGRNLLFLSFAAVFAKQRGINNIITGVSQSDFSGYPDCRDVFIKSLNVTLNLAMDYQFVLITPLMWIDKAETWKLADDLGVLDIVKNETLTCYNGIKGNGCGECPACKLRKNGYVEFKRLYK</sequence>
<comment type="function">
    <text evidence="1">Catalyzes the ATP-dependent conversion of 7-carboxy-7-deazaguanine (CDG) to 7-cyano-7-deazaguanine (preQ(0)).</text>
</comment>
<comment type="catalytic activity">
    <reaction evidence="1">
        <text>7-carboxy-7-deazaguanine + NH4(+) + ATP = 7-cyano-7-deazaguanine + ADP + phosphate + H2O + H(+)</text>
        <dbReference type="Rhea" id="RHEA:27982"/>
        <dbReference type="ChEBI" id="CHEBI:15377"/>
        <dbReference type="ChEBI" id="CHEBI:15378"/>
        <dbReference type="ChEBI" id="CHEBI:28938"/>
        <dbReference type="ChEBI" id="CHEBI:30616"/>
        <dbReference type="ChEBI" id="CHEBI:43474"/>
        <dbReference type="ChEBI" id="CHEBI:45075"/>
        <dbReference type="ChEBI" id="CHEBI:61036"/>
        <dbReference type="ChEBI" id="CHEBI:456216"/>
        <dbReference type="EC" id="6.3.4.20"/>
    </reaction>
</comment>
<comment type="cofactor">
    <cofactor evidence="1">
        <name>Zn(2+)</name>
        <dbReference type="ChEBI" id="CHEBI:29105"/>
    </cofactor>
    <text evidence="1">Binds 1 zinc ion per subunit.</text>
</comment>
<comment type="pathway">
    <text evidence="1">Purine metabolism; 7-cyano-7-deazaguanine biosynthesis.</text>
</comment>
<comment type="subunit">
    <text evidence="1">Homodimer.</text>
</comment>
<comment type="similarity">
    <text evidence="1">Belongs to the QueC family.</text>
</comment>
<evidence type="ECO:0000255" key="1">
    <source>
        <dbReference type="HAMAP-Rule" id="MF_01633"/>
    </source>
</evidence>
<proteinExistence type="inferred from homology"/>
<protein>
    <recommendedName>
        <fullName evidence="1">7-cyano-7-deazaguanine synthase</fullName>
        <ecNumber evidence="1">6.3.4.20</ecNumber>
    </recommendedName>
    <alternativeName>
        <fullName evidence="1">7-cyano-7-carbaguanine synthase</fullName>
    </alternativeName>
    <alternativeName>
        <fullName evidence="1">PreQ(0) synthase</fullName>
    </alternativeName>
    <alternativeName>
        <fullName evidence="1">Queuosine biosynthesis protein QueC</fullName>
    </alternativeName>
</protein>
<accession>Q97D53</accession>
<name>QUEC_CLOAB</name>
<organism>
    <name type="scientific">Clostridium acetobutylicum (strain ATCC 824 / DSM 792 / JCM 1419 / IAM 19013 / LMG 5710 / NBRC 13948 / NRRL B-527 / VKM B-1787 / 2291 / W)</name>
    <dbReference type="NCBI Taxonomy" id="272562"/>
    <lineage>
        <taxon>Bacteria</taxon>
        <taxon>Bacillati</taxon>
        <taxon>Bacillota</taxon>
        <taxon>Clostridia</taxon>
        <taxon>Eubacteriales</taxon>
        <taxon>Clostridiaceae</taxon>
        <taxon>Clostridium</taxon>
    </lineage>
</organism>
<gene>
    <name evidence="1" type="primary">queC</name>
    <name type="ordered locus">CA_C3627</name>
</gene>
<reference key="1">
    <citation type="journal article" date="2001" name="J. Bacteriol.">
        <title>Genome sequence and comparative analysis of the solvent-producing bacterium Clostridium acetobutylicum.</title>
        <authorList>
            <person name="Noelling J."/>
            <person name="Breton G."/>
            <person name="Omelchenko M.V."/>
            <person name="Makarova K.S."/>
            <person name="Zeng Q."/>
            <person name="Gibson R."/>
            <person name="Lee H.M."/>
            <person name="Dubois J."/>
            <person name="Qiu D."/>
            <person name="Hitti J."/>
            <person name="Wolf Y.I."/>
            <person name="Tatusov R.L."/>
            <person name="Sabathe F."/>
            <person name="Doucette-Stamm L.A."/>
            <person name="Soucaille P."/>
            <person name="Daly M.J."/>
            <person name="Bennett G.N."/>
            <person name="Koonin E.V."/>
            <person name="Smith D.R."/>
        </authorList>
    </citation>
    <scope>NUCLEOTIDE SEQUENCE [LARGE SCALE GENOMIC DNA]</scope>
    <source>
        <strain>ATCC 824 / DSM 792 / JCM 1419 / IAM 19013 / LMG 5710 / NBRC 13948 / NRRL B-527 / VKM B-1787 / 2291 / W</strain>
    </source>
</reference>
<dbReference type="EC" id="6.3.4.20" evidence="1"/>
<dbReference type="EMBL" id="AE001437">
    <property type="protein sequence ID" value="AAK81550.1"/>
    <property type="molecule type" value="Genomic_DNA"/>
</dbReference>
<dbReference type="PIR" id="C97345">
    <property type="entry name" value="C97345"/>
</dbReference>
<dbReference type="RefSeq" id="NP_350210.1">
    <property type="nucleotide sequence ID" value="NC_003030.1"/>
</dbReference>
<dbReference type="RefSeq" id="WP_010966890.1">
    <property type="nucleotide sequence ID" value="NC_003030.1"/>
</dbReference>
<dbReference type="SMR" id="Q97D53"/>
<dbReference type="STRING" id="272562.CA_C3627"/>
<dbReference type="GeneID" id="45000125"/>
<dbReference type="KEGG" id="cac:CA_C3627"/>
<dbReference type="PATRIC" id="fig|272562.8.peg.3817"/>
<dbReference type="eggNOG" id="COG0603">
    <property type="taxonomic scope" value="Bacteria"/>
</dbReference>
<dbReference type="HOGENOM" id="CLU_081854_0_0_9"/>
<dbReference type="OrthoDB" id="9789567at2"/>
<dbReference type="UniPathway" id="UPA00391"/>
<dbReference type="Proteomes" id="UP000000814">
    <property type="component" value="Chromosome"/>
</dbReference>
<dbReference type="GO" id="GO:0005524">
    <property type="term" value="F:ATP binding"/>
    <property type="evidence" value="ECO:0007669"/>
    <property type="project" value="UniProtKB-UniRule"/>
</dbReference>
<dbReference type="GO" id="GO:0016879">
    <property type="term" value="F:ligase activity, forming carbon-nitrogen bonds"/>
    <property type="evidence" value="ECO:0007669"/>
    <property type="project" value="UniProtKB-UniRule"/>
</dbReference>
<dbReference type="GO" id="GO:0008270">
    <property type="term" value="F:zinc ion binding"/>
    <property type="evidence" value="ECO:0007669"/>
    <property type="project" value="UniProtKB-UniRule"/>
</dbReference>
<dbReference type="GO" id="GO:0008616">
    <property type="term" value="P:queuosine biosynthetic process"/>
    <property type="evidence" value="ECO:0007669"/>
    <property type="project" value="UniProtKB-UniRule"/>
</dbReference>
<dbReference type="CDD" id="cd01995">
    <property type="entry name" value="QueC-like"/>
    <property type="match status" value="1"/>
</dbReference>
<dbReference type="FunFam" id="3.40.50.620:FF:000017">
    <property type="entry name" value="7-cyano-7-deazaguanine synthase"/>
    <property type="match status" value="1"/>
</dbReference>
<dbReference type="Gene3D" id="3.40.50.620">
    <property type="entry name" value="HUPs"/>
    <property type="match status" value="1"/>
</dbReference>
<dbReference type="HAMAP" id="MF_01633">
    <property type="entry name" value="QueC"/>
    <property type="match status" value="1"/>
</dbReference>
<dbReference type="InterPro" id="IPR018317">
    <property type="entry name" value="QueC"/>
</dbReference>
<dbReference type="InterPro" id="IPR014729">
    <property type="entry name" value="Rossmann-like_a/b/a_fold"/>
</dbReference>
<dbReference type="NCBIfam" id="TIGR00364">
    <property type="entry name" value="7-cyano-7-deazaguanine synthase QueC"/>
    <property type="match status" value="1"/>
</dbReference>
<dbReference type="PANTHER" id="PTHR42914">
    <property type="entry name" value="7-CYANO-7-DEAZAGUANINE SYNTHASE"/>
    <property type="match status" value="1"/>
</dbReference>
<dbReference type="PANTHER" id="PTHR42914:SF1">
    <property type="entry name" value="7-CYANO-7-DEAZAGUANINE SYNTHASE"/>
    <property type="match status" value="1"/>
</dbReference>
<dbReference type="Pfam" id="PF06508">
    <property type="entry name" value="QueC"/>
    <property type="match status" value="1"/>
</dbReference>
<dbReference type="PIRSF" id="PIRSF006293">
    <property type="entry name" value="ExsB"/>
    <property type="match status" value="1"/>
</dbReference>
<dbReference type="SUPFAM" id="SSF52402">
    <property type="entry name" value="Adenine nucleotide alpha hydrolases-like"/>
    <property type="match status" value="1"/>
</dbReference>
<feature type="chain" id="PRO_0000246830" description="7-cyano-7-deazaguanine synthase">
    <location>
        <begin position="1"/>
        <end position="222"/>
    </location>
</feature>
<feature type="binding site" evidence="1">
    <location>
        <begin position="14"/>
        <end position="24"/>
    </location>
    <ligand>
        <name>ATP</name>
        <dbReference type="ChEBI" id="CHEBI:30616"/>
    </ligand>
</feature>
<feature type="binding site" evidence="1">
    <location>
        <position position="192"/>
    </location>
    <ligand>
        <name>Zn(2+)</name>
        <dbReference type="ChEBI" id="CHEBI:29105"/>
    </ligand>
</feature>
<feature type="binding site" evidence="1">
    <location>
        <position position="201"/>
    </location>
    <ligand>
        <name>Zn(2+)</name>
        <dbReference type="ChEBI" id="CHEBI:29105"/>
    </ligand>
</feature>
<feature type="binding site" evidence="1">
    <location>
        <position position="204"/>
    </location>
    <ligand>
        <name>Zn(2+)</name>
        <dbReference type="ChEBI" id="CHEBI:29105"/>
    </ligand>
</feature>
<feature type="binding site" evidence="1">
    <location>
        <position position="207"/>
    </location>
    <ligand>
        <name>Zn(2+)</name>
        <dbReference type="ChEBI" id="CHEBI:29105"/>
    </ligand>
</feature>
<keyword id="KW-0067">ATP-binding</keyword>
<keyword id="KW-0436">Ligase</keyword>
<keyword id="KW-0479">Metal-binding</keyword>
<keyword id="KW-0547">Nucleotide-binding</keyword>
<keyword id="KW-0671">Queuosine biosynthesis</keyword>
<keyword id="KW-1185">Reference proteome</keyword>
<keyword id="KW-0862">Zinc</keyword>